<feature type="chain" id="PRO_0000254333" description="ATP synthase subunit beta">
    <location>
        <begin position="1"/>
        <end position="488"/>
    </location>
</feature>
<feature type="binding site" evidence="1">
    <location>
        <begin position="164"/>
        <end position="171"/>
    </location>
    <ligand>
        <name>ATP</name>
        <dbReference type="ChEBI" id="CHEBI:30616"/>
    </ligand>
</feature>
<keyword id="KW-0066">ATP synthesis</keyword>
<keyword id="KW-0067">ATP-binding</keyword>
<keyword id="KW-0139">CF(1)</keyword>
<keyword id="KW-0375">Hydrogen ion transport</keyword>
<keyword id="KW-0406">Ion transport</keyword>
<keyword id="KW-0472">Membrane</keyword>
<keyword id="KW-0547">Nucleotide-binding</keyword>
<keyword id="KW-1185">Reference proteome</keyword>
<keyword id="KW-0793">Thylakoid</keyword>
<keyword id="KW-1278">Translocase</keyword>
<keyword id="KW-0813">Transport</keyword>
<dbReference type="EC" id="7.1.2.2" evidence="1"/>
<dbReference type="EMBL" id="BX548175">
    <property type="protein sequence ID" value="CAE21626.1"/>
    <property type="molecule type" value="Genomic_DNA"/>
</dbReference>
<dbReference type="RefSeq" id="WP_011130819.1">
    <property type="nucleotide sequence ID" value="NC_005071.1"/>
</dbReference>
<dbReference type="SMR" id="Q7V5U2"/>
<dbReference type="KEGG" id="pmt:PMT_1451"/>
<dbReference type="eggNOG" id="COG0055">
    <property type="taxonomic scope" value="Bacteria"/>
</dbReference>
<dbReference type="HOGENOM" id="CLU_022398_0_2_3"/>
<dbReference type="OrthoDB" id="9801639at2"/>
<dbReference type="Proteomes" id="UP000001423">
    <property type="component" value="Chromosome"/>
</dbReference>
<dbReference type="GO" id="GO:0031676">
    <property type="term" value="C:plasma membrane-derived thylakoid membrane"/>
    <property type="evidence" value="ECO:0007669"/>
    <property type="project" value="UniProtKB-SubCell"/>
</dbReference>
<dbReference type="GO" id="GO:0045259">
    <property type="term" value="C:proton-transporting ATP synthase complex"/>
    <property type="evidence" value="ECO:0007669"/>
    <property type="project" value="UniProtKB-KW"/>
</dbReference>
<dbReference type="GO" id="GO:0005524">
    <property type="term" value="F:ATP binding"/>
    <property type="evidence" value="ECO:0007669"/>
    <property type="project" value="UniProtKB-UniRule"/>
</dbReference>
<dbReference type="GO" id="GO:0016887">
    <property type="term" value="F:ATP hydrolysis activity"/>
    <property type="evidence" value="ECO:0007669"/>
    <property type="project" value="InterPro"/>
</dbReference>
<dbReference type="GO" id="GO:0046933">
    <property type="term" value="F:proton-transporting ATP synthase activity, rotational mechanism"/>
    <property type="evidence" value="ECO:0007669"/>
    <property type="project" value="UniProtKB-UniRule"/>
</dbReference>
<dbReference type="CDD" id="cd18110">
    <property type="entry name" value="ATP-synt_F1_beta_C"/>
    <property type="match status" value="1"/>
</dbReference>
<dbReference type="CDD" id="cd18115">
    <property type="entry name" value="ATP-synt_F1_beta_N"/>
    <property type="match status" value="1"/>
</dbReference>
<dbReference type="CDD" id="cd01133">
    <property type="entry name" value="F1-ATPase_beta_CD"/>
    <property type="match status" value="1"/>
</dbReference>
<dbReference type="FunFam" id="1.10.1140.10:FF:000001">
    <property type="entry name" value="ATP synthase subunit beta"/>
    <property type="match status" value="1"/>
</dbReference>
<dbReference type="FunFam" id="3.40.50.12240:FF:000006">
    <property type="entry name" value="ATP synthase subunit beta"/>
    <property type="match status" value="1"/>
</dbReference>
<dbReference type="FunFam" id="3.40.50.300:FF:000004">
    <property type="entry name" value="ATP synthase subunit beta"/>
    <property type="match status" value="1"/>
</dbReference>
<dbReference type="FunFam" id="2.40.10.170:FF:000002">
    <property type="entry name" value="ATP synthase subunit beta, chloroplastic"/>
    <property type="match status" value="1"/>
</dbReference>
<dbReference type="Gene3D" id="2.40.10.170">
    <property type="match status" value="1"/>
</dbReference>
<dbReference type="Gene3D" id="1.10.1140.10">
    <property type="entry name" value="Bovine Mitochondrial F1-atpase, Atp Synthase Beta Chain, Chain D, domain 3"/>
    <property type="match status" value="1"/>
</dbReference>
<dbReference type="Gene3D" id="3.40.50.300">
    <property type="entry name" value="P-loop containing nucleotide triphosphate hydrolases"/>
    <property type="match status" value="1"/>
</dbReference>
<dbReference type="HAMAP" id="MF_01347">
    <property type="entry name" value="ATP_synth_beta_bact"/>
    <property type="match status" value="1"/>
</dbReference>
<dbReference type="InterPro" id="IPR003593">
    <property type="entry name" value="AAA+_ATPase"/>
</dbReference>
<dbReference type="InterPro" id="IPR055190">
    <property type="entry name" value="ATP-synt_VA_C"/>
</dbReference>
<dbReference type="InterPro" id="IPR005722">
    <property type="entry name" value="ATP_synth_F1_bsu"/>
</dbReference>
<dbReference type="InterPro" id="IPR020003">
    <property type="entry name" value="ATPase_a/bsu_AS"/>
</dbReference>
<dbReference type="InterPro" id="IPR050053">
    <property type="entry name" value="ATPase_alpha/beta_chains"/>
</dbReference>
<dbReference type="InterPro" id="IPR004100">
    <property type="entry name" value="ATPase_F1/V1/A1_a/bsu_N"/>
</dbReference>
<dbReference type="InterPro" id="IPR036121">
    <property type="entry name" value="ATPase_F1/V1/A1_a/bsu_N_sf"/>
</dbReference>
<dbReference type="InterPro" id="IPR000194">
    <property type="entry name" value="ATPase_F1/V1/A1_a/bsu_nucl-bd"/>
</dbReference>
<dbReference type="InterPro" id="IPR024034">
    <property type="entry name" value="ATPase_F1/V1_b/a_C"/>
</dbReference>
<dbReference type="InterPro" id="IPR027417">
    <property type="entry name" value="P-loop_NTPase"/>
</dbReference>
<dbReference type="NCBIfam" id="TIGR01039">
    <property type="entry name" value="atpD"/>
    <property type="match status" value="1"/>
</dbReference>
<dbReference type="PANTHER" id="PTHR15184">
    <property type="entry name" value="ATP SYNTHASE"/>
    <property type="match status" value="1"/>
</dbReference>
<dbReference type="PANTHER" id="PTHR15184:SF71">
    <property type="entry name" value="ATP SYNTHASE SUBUNIT BETA, MITOCHONDRIAL"/>
    <property type="match status" value="1"/>
</dbReference>
<dbReference type="Pfam" id="PF00006">
    <property type="entry name" value="ATP-synt_ab"/>
    <property type="match status" value="1"/>
</dbReference>
<dbReference type="Pfam" id="PF02874">
    <property type="entry name" value="ATP-synt_ab_N"/>
    <property type="match status" value="1"/>
</dbReference>
<dbReference type="Pfam" id="PF22919">
    <property type="entry name" value="ATP-synt_VA_C"/>
    <property type="match status" value="1"/>
</dbReference>
<dbReference type="SMART" id="SM00382">
    <property type="entry name" value="AAA"/>
    <property type="match status" value="1"/>
</dbReference>
<dbReference type="SUPFAM" id="SSF47917">
    <property type="entry name" value="C-terminal domain of alpha and beta subunits of F1 ATP synthase"/>
    <property type="match status" value="1"/>
</dbReference>
<dbReference type="SUPFAM" id="SSF50615">
    <property type="entry name" value="N-terminal domain of alpha and beta subunits of F1 ATP synthase"/>
    <property type="match status" value="1"/>
</dbReference>
<dbReference type="SUPFAM" id="SSF52540">
    <property type="entry name" value="P-loop containing nucleoside triphosphate hydrolases"/>
    <property type="match status" value="1"/>
</dbReference>
<dbReference type="PROSITE" id="PS00152">
    <property type="entry name" value="ATPASE_ALPHA_BETA"/>
    <property type="match status" value="1"/>
</dbReference>
<reference key="1">
    <citation type="journal article" date="2003" name="Nature">
        <title>Genome divergence in two Prochlorococcus ecotypes reflects oceanic niche differentiation.</title>
        <authorList>
            <person name="Rocap G."/>
            <person name="Larimer F.W."/>
            <person name="Lamerdin J.E."/>
            <person name="Malfatti S."/>
            <person name="Chain P."/>
            <person name="Ahlgren N.A."/>
            <person name="Arellano A."/>
            <person name="Coleman M."/>
            <person name="Hauser L."/>
            <person name="Hess W.R."/>
            <person name="Johnson Z.I."/>
            <person name="Land M.L."/>
            <person name="Lindell D."/>
            <person name="Post A.F."/>
            <person name="Regala W."/>
            <person name="Shah M."/>
            <person name="Shaw S.L."/>
            <person name="Steglich C."/>
            <person name="Sullivan M.B."/>
            <person name="Ting C.S."/>
            <person name="Tolonen A."/>
            <person name="Webb E.A."/>
            <person name="Zinser E.R."/>
            <person name="Chisholm S.W."/>
        </authorList>
    </citation>
    <scope>NUCLEOTIDE SEQUENCE [LARGE SCALE GENOMIC DNA]</scope>
    <source>
        <strain>MIT 9313</strain>
    </source>
</reference>
<accession>Q7V5U2</accession>
<sequence>MAAAATATAGTKGVIRQVIGPVLDVEFPAGKLPKILNALRIEGKNPSGQDVAITAEVQQLLGDHRVRAVSMSSTDGLVRGMEALDTGAAISVPVGEATLGRIFNVLGEPVDEQGPVTTDATAPIHRPSPKLTELETKPTVFETGIKVIDLLAPYRQGGKVGLFGGAGVGKTVLIQELINNIAKEHGGVSVFGGVGERTREGNDLYEEFKESGVINSDDLSKSKVALCFGQMNEPPGARMRVGLSALTMAEHFRDVNKQDVLLFIDNIFRFVQAGSEVSALLGRMPSAVGYQPTLGTDVGALQERITSTLEGSITSIQAVYVPADDLTDPAPATTFAHLDATTVLARALAAKGIYPAVDPLDSTSTMLQPSVVGDEHYRTARSVQATLQRYKELQDIIAILGLDELSEDDRRTVDRARKIEKFLSQPFFVAEIFTGMSGKYVKLEETIAGFNMIMSGELDHLPEQAFYLVGNIDEVKAKAEKMASEAKG</sequence>
<proteinExistence type="inferred from homology"/>
<protein>
    <recommendedName>
        <fullName evidence="1">ATP synthase subunit beta</fullName>
        <ecNumber evidence="1">7.1.2.2</ecNumber>
    </recommendedName>
    <alternativeName>
        <fullName evidence="1">ATP synthase F1 sector subunit beta</fullName>
    </alternativeName>
    <alternativeName>
        <fullName evidence="1">F-ATPase subunit beta</fullName>
    </alternativeName>
</protein>
<gene>
    <name evidence="1" type="primary">atpD</name>
    <name evidence="1" type="synonym">atpB</name>
    <name type="ordered locus">PMT_1451</name>
</gene>
<name>ATPB_PROMM</name>
<organism>
    <name type="scientific">Prochlorococcus marinus (strain MIT 9313)</name>
    <dbReference type="NCBI Taxonomy" id="74547"/>
    <lineage>
        <taxon>Bacteria</taxon>
        <taxon>Bacillati</taxon>
        <taxon>Cyanobacteriota</taxon>
        <taxon>Cyanophyceae</taxon>
        <taxon>Synechococcales</taxon>
        <taxon>Prochlorococcaceae</taxon>
        <taxon>Prochlorococcus</taxon>
    </lineage>
</organism>
<comment type="function">
    <text evidence="1">Produces ATP from ADP in the presence of a proton gradient across the membrane. The catalytic sites are hosted primarily by the beta subunits.</text>
</comment>
<comment type="catalytic activity">
    <reaction evidence="1">
        <text>ATP + H2O + 4 H(+)(in) = ADP + phosphate + 5 H(+)(out)</text>
        <dbReference type="Rhea" id="RHEA:57720"/>
        <dbReference type="ChEBI" id="CHEBI:15377"/>
        <dbReference type="ChEBI" id="CHEBI:15378"/>
        <dbReference type="ChEBI" id="CHEBI:30616"/>
        <dbReference type="ChEBI" id="CHEBI:43474"/>
        <dbReference type="ChEBI" id="CHEBI:456216"/>
        <dbReference type="EC" id="7.1.2.2"/>
    </reaction>
</comment>
<comment type="subunit">
    <text evidence="1">F-type ATPases have 2 components, CF(1) - the catalytic core - and CF(0) - the membrane proton channel. CF(1) has five subunits: alpha(3), beta(3), gamma(1), delta(1), epsilon(1). CF(0) has four main subunits: a(1), b(1), b'(1) and c(9-12).</text>
</comment>
<comment type="subcellular location">
    <subcellularLocation>
        <location evidence="1">Cellular thylakoid membrane</location>
        <topology evidence="1">Peripheral membrane protein</topology>
    </subcellularLocation>
</comment>
<comment type="similarity">
    <text evidence="1">Belongs to the ATPase alpha/beta chains family.</text>
</comment>
<evidence type="ECO:0000255" key="1">
    <source>
        <dbReference type="HAMAP-Rule" id="MF_01347"/>
    </source>
</evidence>